<name>MIAB_ANADE</name>
<protein>
    <recommendedName>
        <fullName evidence="1">tRNA-2-methylthio-N(6)-dimethylallyladenosine synthase</fullName>
        <ecNumber evidence="1">2.8.4.3</ecNumber>
    </recommendedName>
    <alternativeName>
        <fullName evidence="1">(Dimethylallyl)adenosine tRNA methylthiotransferase MiaB</fullName>
    </alternativeName>
    <alternativeName>
        <fullName evidence="1">tRNA-i(6)A37 methylthiotransferase</fullName>
    </alternativeName>
</protein>
<gene>
    <name evidence="1" type="primary">miaB</name>
    <name type="ordered locus">Adeh_2355</name>
</gene>
<organism>
    <name type="scientific">Anaeromyxobacter dehalogenans (strain 2CP-C)</name>
    <dbReference type="NCBI Taxonomy" id="290397"/>
    <lineage>
        <taxon>Bacteria</taxon>
        <taxon>Pseudomonadati</taxon>
        <taxon>Myxococcota</taxon>
        <taxon>Myxococcia</taxon>
        <taxon>Myxococcales</taxon>
        <taxon>Cystobacterineae</taxon>
        <taxon>Anaeromyxobacteraceae</taxon>
        <taxon>Anaeromyxobacter</taxon>
    </lineage>
</organism>
<comment type="function">
    <text evidence="1">Catalyzes the methylthiolation of N6-(dimethylallyl)adenosine (i(6)A), leading to the formation of 2-methylthio-N6-(dimethylallyl)adenosine (ms(2)i(6)A) at position 37 in tRNAs that read codons beginning with uridine.</text>
</comment>
<comment type="catalytic activity">
    <reaction evidence="1">
        <text>N(6)-dimethylallyladenosine(37) in tRNA + (sulfur carrier)-SH + AH2 + 2 S-adenosyl-L-methionine = 2-methylsulfanyl-N(6)-dimethylallyladenosine(37) in tRNA + (sulfur carrier)-H + 5'-deoxyadenosine + L-methionine + A + S-adenosyl-L-homocysteine + 2 H(+)</text>
        <dbReference type="Rhea" id="RHEA:37067"/>
        <dbReference type="Rhea" id="RHEA-COMP:10375"/>
        <dbReference type="Rhea" id="RHEA-COMP:10376"/>
        <dbReference type="Rhea" id="RHEA-COMP:14737"/>
        <dbReference type="Rhea" id="RHEA-COMP:14739"/>
        <dbReference type="ChEBI" id="CHEBI:13193"/>
        <dbReference type="ChEBI" id="CHEBI:15378"/>
        <dbReference type="ChEBI" id="CHEBI:17319"/>
        <dbReference type="ChEBI" id="CHEBI:17499"/>
        <dbReference type="ChEBI" id="CHEBI:29917"/>
        <dbReference type="ChEBI" id="CHEBI:57844"/>
        <dbReference type="ChEBI" id="CHEBI:57856"/>
        <dbReference type="ChEBI" id="CHEBI:59789"/>
        <dbReference type="ChEBI" id="CHEBI:64428"/>
        <dbReference type="ChEBI" id="CHEBI:74415"/>
        <dbReference type="ChEBI" id="CHEBI:74417"/>
        <dbReference type="EC" id="2.8.4.3"/>
    </reaction>
</comment>
<comment type="cofactor">
    <cofactor evidence="1">
        <name>[4Fe-4S] cluster</name>
        <dbReference type="ChEBI" id="CHEBI:49883"/>
    </cofactor>
    <text evidence="1">Binds 2 [4Fe-4S] clusters. One cluster is coordinated with 3 cysteines and an exchangeable S-adenosyl-L-methionine.</text>
</comment>
<comment type="subunit">
    <text evidence="1">Monomer.</text>
</comment>
<comment type="subcellular location">
    <subcellularLocation>
        <location evidence="1">Cytoplasm</location>
    </subcellularLocation>
</comment>
<comment type="similarity">
    <text evidence="1">Belongs to the methylthiotransferase family. MiaB subfamily.</text>
</comment>
<sequence>MSDLVPLSRKPAPAAGDPAPSPAAPPRKVYVHTFGCQMNESDSDRMVELLGRHAYARAASADEADLILLNTCAVREKAEQKLLSALGRYREVKARRGALIAVSGCVAQQEKDRLLARVPYVDFVFGPDNIARLPEMVERARGERFAETGWMDSEEYVFPRADAEAARGRATAFVTAMKGCDNVCAFCIVPHTRGREVSRPFPDVVAECAALAAVGVREVTLIGQNVNSYGGGCTFADLLRRVAAVPGIDRIRFTTSHPHDLSGALVEVFRDEPKVMPHFHLPVQSGSDAVLRRMRRDYSVAEYLDRFDRLRAARPGIAITTDFIVGFPGETDADFEASLALLERARFEQSFSFVFSPRPHTVAAVRLGSAPEWQDVPRDVAVARLERLLAAQRRIAGEILAAELGKVVEVLVEGPSDEPGERLGRTPENRVVHLTADEAAAPAGARVPVRITRAGGSSLSGTLA</sequence>
<evidence type="ECO:0000255" key="1">
    <source>
        <dbReference type="HAMAP-Rule" id="MF_01864"/>
    </source>
</evidence>
<evidence type="ECO:0000255" key="2">
    <source>
        <dbReference type="PROSITE-ProRule" id="PRU01266"/>
    </source>
</evidence>
<evidence type="ECO:0000256" key="3">
    <source>
        <dbReference type="SAM" id="MobiDB-lite"/>
    </source>
</evidence>
<dbReference type="EC" id="2.8.4.3" evidence="1"/>
<dbReference type="EMBL" id="CP000251">
    <property type="protein sequence ID" value="ABC82125.1"/>
    <property type="molecule type" value="Genomic_DNA"/>
</dbReference>
<dbReference type="RefSeq" id="WP_011421407.1">
    <property type="nucleotide sequence ID" value="NC_007760.1"/>
</dbReference>
<dbReference type="SMR" id="Q2IKE9"/>
<dbReference type="STRING" id="290397.Adeh_2355"/>
<dbReference type="KEGG" id="ade:Adeh_2355"/>
<dbReference type="eggNOG" id="COG0621">
    <property type="taxonomic scope" value="Bacteria"/>
</dbReference>
<dbReference type="HOGENOM" id="CLU_018697_2_2_7"/>
<dbReference type="OrthoDB" id="9805215at2"/>
<dbReference type="Proteomes" id="UP000001935">
    <property type="component" value="Chromosome"/>
</dbReference>
<dbReference type="GO" id="GO:0005829">
    <property type="term" value="C:cytosol"/>
    <property type="evidence" value="ECO:0007669"/>
    <property type="project" value="TreeGrafter"/>
</dbReference>
<dbReference type="GO" id="GO:0051539">
    <property type="term" value="F:4 iron, 4 sulfur cluster binding"/>
    <property type="evidence" value="ECO:0007669"/>
    <property type="project" value="UniProtKB-UniRule"/>
</dbReference>
<dbReference type="GO" id="GO:0046872">
    <property type="term" value="F:metal ion binding"/>
    <property type="evidence" value="ECO:0007669"/>
    <property type="project" value="UniProtKB-KW"/>
</dbReference>
<dbReference type="GO" id="GO:0035597">
    <property type="term" value="F:N6-isopentenyladenosine methylthiotransferase activity"/>
    <property type="evidence" value="ECO:0007669"/>
    <property type="project" value="TreeGrafter"/>
</dbReference>
<dbReference type="CDD" id="cd01335">
    <property type="entry name" value="Radical_SAM"/>
    <property type="match status" value="1"/>
</dbReference>
<dbReference type="FunFam" id="3.40.50.12160:FF:000003">
    <property type="entry name" value="CDK5 regulatory subunit-associated protein 1"/>
    <property type="match status" value="1"/>
</dbReference>
<dbReference type="FunFam" id="3.80.30.20:FF:000001">
    <property type="entry name" value="tRNA-2-methylthio-N(6)-dimethylallyladenosine synthase 2"/>
    <property type="match status" value="1"/>
</dbReference>
<dbReference type="Gene3D" id="3.40.50.12160">
    <property type="entry name" value="Methylthiotransferase, N-terminal domain"/>
    <property type="match status" value="1"/>
</dbReference>
<dbReference type="Gene3D" id="3.80.30.20">
    <property type="entry name" value="tm_1862 like domain"/>
    <property type="match status" value="1"/>
</dbReference>
<dbReference type="HAMAP" id="MF_01864">
    <property type="entry name" value="tRNA_metthiotr_MiaB"/>
    <property type="match status" value="1"/>
</dbReference>
<dbReference type="InterPro" id="IPR006638">
    <property type="entry name" value="Elp3/MiaA/NifB-like_rSAM"/>
</dbReference>
<dbReference type="InterPro" id="IPR005839">
    <property type="entry name" value="Methylthiotransferase"/>
</dbReference>
<dbReference type="InterPro" id="IPR013848">
    <property type="entry name" value="Methylthiotransferase_N"/>
</dbReference>
<dbReference type="InterPro" id="IPR038135">
    <property type="entry name" value="Methylthiotransferase_N_sf"/>
</dbReference>
<dbReference type="InterPro" id="IPR006463">
    <property type="entry name" value="MiaB_methiolase"/>
</dbReference>
<dbReference type="InterPro" id="IPR007197">
    <property type="entry name" value="rSAM"/>
</dbReference>
<dbReference type="InterPro" id="IPR023404">
    <property type="entry name" value="rSAM_horseshoe"/>
</dbReference>
<dbReference type="InterPro" id="IPR002792">
    <property type="entry name" value="TRAM_dom"/>
</dbReference>
<dbReference type="NCBIfam" id="TIGR01574">
    <property type="entry name" value="miaB-methiolase"/>
    <property type="match status" value="1"/>
</dbReference>
<dbReference type="NCBIfam" id="TIGR00089">
    <property type="entry name" value="MiaB/RimO family radical SAM methylthiotransferase"/>
    <property type="match status" value="1"/>
</dbReference>
<dbReference type="PANTHER" id="PTHR43020">
    <property type="entry name" value="CDK5 REGULATORY SUBUNIT-ASSOCIATED PROTEIN 1"/>
    <property type="match status" value="1"/>
</dbReference>
<dbReference type="PANTHER" id="PTHR43020:SF2">
    <property type="entry name" value="MITOCHONDRIAL TRNA METHYLTHIOTRANSFERASE CDK5RAP1"/>
    <property type="match status" value="1"/>
</dbReference>
<dbReference type="Pfam" id="PF04055">
    <property type="entry name" value="Radical_SAM"/>
    <property type="match status" value="1"/>
</dbReference>
<dbReference type="Pfam" id="PF01938">
    <property type="entry name" value="TRAM"/>
    <property type="match status" value="1"/>
</dbReference>
<dbReference type="Pfam" id="PF00919">
    <property type="entry name" value="UPF0004"/>
    <property type="match status" value="1"/>
</dbReference>
<dbReference type="SFLD" id="SFLDF00273">
    <property type="entry name" value="(dimethylallyl)adenosine_tRNA"/>
    <property type="match status" value="1"/>
</dbReference>
<dbReference type="SFLD" id="SFLDG01082">
    <property type="entry name" value="B12-binding_domain_containing"/>
    <property type="match status" value="1"/>
</dbReference>
<dbReference type="SFLD" id="SFLDG01061">
    <property type="entry name" value="methylthiotransferase"/>
    <property type="match status" value="1"/>
</dbReference>
<dbReference type="SMART" id="SM00729">
    <property type="entry name" value="Elp3"/>
    <property type="match status" value="1"/>
</dbReference>
<dbReference type="SUPFAM" id="SSF102114">
    <property type="entry name" value="Radical SAM enzymes"/>
    <property type="match status" value="1"/>
</dbReference>
<dbReference type="PROSITE" id="PS51449">
    <property type="entry name" value="MTTASE_N"/>
    <property type="match status" value="1"/>
</dbReference>
<dbReference type="PROSITE" id="PS51918">
    <property type="entry name" value="RADICAL_SAM"/>
    <property type="match status" value="1"/>
</dbReference>
<dbReference type="PROSITE" id="PS50926">
    <property type="entry name" value="TRAM"/>
    <property type="match status" value="1"/>
</dbReference>
<accession>Q2IKE9</accession>
<proteinExistence type="inferred from homology"/>
<reference key="1">
    <citation type="submission" date="2006-01" db="EMBL/GenBank/DDBJ databases">
        <title>Complete sequence of Anaeromyxobacter dehalogenans 2CP-C.</title>
        <authorList>
            <person name="Copeland A."/>
            <person name="Lucas S."/>
            <person name="Lapidus A."/>
            <person name="Barry K."/>
            <person name="Detter J.C."/>
            <person name="Glavina T."/>
            <person name="Hammon N."/>
            <person name="Israni S."/>
            <person name="Pitluck S."/>
            <person name="Brettin T."/>
            <person name="Bruce D."/>
            <person name="Han C."/>
            <person name="Tapia R."/>
            <person name="Gilna P."/>
            <person name="Kiss H."/>
            <person name="Schmutz J."/>
            <person name="Larimer F."/>
            <person name="Land M."/>
            <person name="Kyrpides N."/>
            <person name="Anderson I."/>
            <person name="Sanford R.A."/>
            <person name="Ritalahti K.M."/>
            <person name="Thomas H.S."/>
            <person name="Kirby J.R."/>
            <person name="Zhulin I.B."/>
            <person name="Loeffler F.E."/>
            <person name="Richardson P."/>
        </authorList>
    </citation>
    <scope>NUCLEOTIDE SEQUENCE [LARGE SCALE GENOMIC DNA]</scope>
    <source>
        <strain>2CP-C</strain>
    </source>
</reference>
<feature type="chain" id="PRO_0000374110" description="tRNA-2-methylthio-N(6)-dimethylallyladenosine synthase">
    <location>
        <begin position="1"/>
        <end position="464"/>
    </location>
</feature>
<feature type="domain" description="MTTase N-terminal" evidence="1">
    <location>
        <begin position="27"/>
        <end position="142"/>
    </location>
</feature>
<feature type="domain" description="Radical SAM core" evidence="2">
    <location>
        <begin position="166"/>
        <end position="398"/>
    </location>
</feature>
<feature type="domain" description="TRAM" evidence="1">
    <location>
        <begin position="401"/>
        <end position="464"/>
    </location>
</feature>
<feature type="region of interest" description="Disordered" evidence="3">
    <location>
        <begin position="1"/>
        <end position="25"/>
    </location>
</feature>
<feature type="binding site" evidence="1">
    <location>
        <position position="36"/>
    </location>
    <ligand>
        <name>[4Fe-4S] cluster</name>
        <dbReference type="ChEBI" id="CHEBI:49883"/>
        <label>1</label>
    </ligand>
</feature>
<feature type="binding site" evidence="1">
    <location>
        <position position="72"/>
    </location>
    <ligand>
        <name>[4Fe-4S] cluster</name>
        <dbReference type="ChEBI" id="CHEBI:49883"/>
        <label>1</label>
    </ligand>
</feature>
<feature type="binding site" evidence="1">
    <location>
        <position position="105"/>
    </location>
    <ligand>
        <name>[4Fe-4S] cluster</name>
        <dbReference type="ChEBI" id="CHEBI:49883"/>
        <label>1</label>
    </ligand>
</feature>
<feature type="binding site" evidence="1">
    <location>
        <position position="180"/>
    </location>
    <ligand>
        <name>[4Fe-4S] cluster</name>
        <dbReference type="ChEBI" id="CHEBI:49883"/>
        <label>2</label>
        <note>4Fe-4S-S-AdoMet</note>
    </ligand>
</feature>
<feature type="binding site" evidence="1">
    <location>
        <position position="184"/>
    </location>
    <ligand>
        <name>[4Fe-4S] cluster</name>
        <dbReference type="ChEBI" id="CHEBI:49883"/>
        <label>2</label>
        <note>4Fe-4S-S-AdoMet</note>
    </ligand>
</feature>
<feature type="binding site" evidence="1">
    <location>
        <position position="187"/>
    </location>
    <ligand>
        <name>[4Fe-4S] cluster</name>
        <dbReference type="ChEBI" id="CHEBI:49883"/>
        <label>2</label>
        <note>4Fe-4S-S-AdoMet</note>
    </ligand>
</feature>
<keyword id="KW-0004">4Fe-4S</keyword>
<keyword id="KW-0963">Cytoplasm</keyword>
<keyword id="KW-0408">Iron</keyword>
<keyword id="KW-0411">Iron-sulfur</keyword>
<keyword id="KW-0479">Metal-binding</keyword>
<keyword id="KW-1185">Reference proteome</keyword>
<keyword id="KW-0949">S-adenosyl-L-methionine</keyword>
<keyword id="KW-0808">Transferase</keyword>
<keyword id="KW-0819">tRNA processing</keyword>